<dbReference type="EC" id="2.1.1.329" evidence="1"/>
<dbReference type="EMBL" id="BA000039">
    <property type="protein sequence ID" value="BAC09925.1"/>
    <property type="molecule type" value="Genomic_DNA"/>
</dbReference>
<dbReference type="RefSeq" id="NP_683163.1">
    <property type="nucleotide sequence ID" value="NC_004113.1"/>
</dbReference>
<dbReference type="RefSeq" id="WP_011058206.1">
    <property type="nucleotide sequence ID" value="NC_004113.1"/>
</dbReference>
<dbReference type="SMR" id="Q8DGE4"/>
<dbReference type="STRING" id="197221.gene:10748993"/>
<dbReference type="EnsemblBacteria" id="BAC09925">
    <property type="protein sequence ID" value="BAC09925"/>
    <property type="gene ID" value="BAC09925"/>
</dbReference>
<dbReference type="KEGG" id="tel:tll2373"/>
<dbReference type="PATRIC" id="fig|197221.4.peg.2490"/>
<dbReference type="eggNOG" id="COG2226">
    <property type="taxonomic scope" value="Bacteria"/>
</dbReference>
<dbReference type="UniPathway" id="UPA00995"/>
<dbReference type="Proteomes" id="UP000000440">
    <property type="component" value="Chromosome"/>
</dbReference>
<dbReference type="GO" id="GO:0052624">
    <property type="term" value="F:2-phytyl-1,4-naphthoquinone methyltransferase activity"/>
    <property type="evidence" value="ECO:0007669"/>
    <property type="project" value="UniProtKB-EC"/>
</dbReference>
<dbReference type="GO" id="GO:0032259">
    <property type="term" value="P:methylation"/>
    <property type="evidence" value="ECO:0007669"/>
    <property type="project" value="UniProtKB-KW"/>
</dbReference>
<dbReference type="GO" id="GO:0042372">
    <property type="term" value="P:phylloquinone biosynthetic process"/>
    <property type="evidence" value="ECO:0007669"/>
    <property type="project" value="UniProtKB-UniRule"/>
</dbReference>
<dbReference type="CDD" id="cd02440">
    <property type="entry name" value="AdoMet_MTases"/>
    <property type="match status" value="1"/>
</dbReference>
<dbReference type="Gene3D" id="3.40.50.150">
    <property type="entry name" value="Vaccinia Virus protein VP39"/>
    <property type="match status" value="1"/>
</dbReference>
<dbReference type="HAMAP" id="MF_01982">
    <property type="entry name" value="MenG_phylloquinone_subfam"/>
    <property type="match status" value="1"/>
</dbReference>
<dbReference type="HAMAP" id="MF_01813">
    <property type="entry name" value="MenG_UbiE_methyltr"/>
    <property type="match status" value="1"/>
</dbReference>
<dbReference type="InterPro" id="IPR032904">
    <property type="entry name" value="MenG"/>
</dbReference>
<dbReference type="InterPro" id="IPR029063">
    <property type="entry name" value="SAM-dependent_MTases_sf"/>
</dbReference>
<dbReference type="InterPro" id="IPR004033">
    <property type="entry name" value="UbiE/COQ5_MeTrFase"/>
</dbReference>
<dbReference type="InterPro" id="IPR023576">
    <property type="entry name" value="UbiE/COQ5_MeTrFase_CS"/>
</dbReference>
<dbReference type="NCBIfam" id="TIGR01934">
    <property type="entry name" value="MenG_MenH_UbiE"/>
    <property type="match status" value="1"/>
</dbReference>
<dbReference type="NCBIfam" id="NF001244">
    <property type="entry name" value="PRK00216.1-5"/>
    <property type="match status" value="1"/>
</dbReference>
<dbReference type="PANTHER" id="PTHR43591:SF24">
    <property type="entry name" value="2-METHOXY-6-POLYPRENYL-1,4-BENZOQUINOL METHYLASE, MITOCHONDRIAL"/>
    <property type="match status" value="1"/>
</dbReference>
<dbReference type="PANTHER" id="PTHR43591">
    <property type="entry name" value="METHYLTRANSFERASE"/>
    <property type="match status" value="1"/>
</dbReference>
<dbReference type="Pfam" id="PF01209">
    <property type="entry name" value="Ubie_methyltran"/>
    <property type="match status" value="1"/>
</dbReference>
<dbReference type="SUPFAM" id="SSF53335">
    <property type="entry name" value="S-adenosyl-L-methionine-dependent methyltransferases"/>
    <property type="match status" value="1"/>
</dbReference>
<dbReference type="PROSITE" id="PS51608">
    <property type="entry name" value="SAM_MT_UBIE"/>
    <property type="match status" value="1"/>
</dbReference>
<dbReference type="PROSITE" id="PS01183">
    <property type="entry name" value="UBIE_1"/>
    <property type="match status" value="1"/>
</dbReference>
<gene>
    <name evidence="1" type="primary">menG</name>
    <name type="ordered locus">tll2373</name>
</gene>
<sequence>MTNIQALFERIAPLYDRLNDQLSFGLHHVWKQMAVDWLELPQGATALDLCCGTGDLTRLLARRVGRQGRVVGLDFAAAPLAIARQRSDHYPQIEWLQGDALAVPFAPQTFQGITIGYGLRNVVDIPQALREMFRLLVPGGRAAILDFSHPQTSALEQFQQWYLQQWVVPTARHYGLAAEYDYLWPSIQAFPTPPTLCALIQQAGFERVKHYPLLGGLMAITVAQK</sequence>
<comment type="function">
    <text evidence="1">Methyltransferase required for the conversion of 2-phytyl-1,4-beta-naphthoquinol to phylloquinol.</text>
</comment>
<comment type="catalytic activity">
    <reaction evidence="1">
        <text>demethylphylloquinol + S-adenosyl-L-methionine = phylloquinol + S-adenosyl-L-homocysteine + H(+)</text>
        <dbReference type="Rhea" id="RHEA:40551"/>
        <dbReference type="ChEBI" id="CHEBI:15378"/>
        <dbReference type="ChEBI" id="CHEBI:28433"/>
        <dbReference type="ChEBI" id="CHEBI:57856"/>
        <dbReference type="ChEBI" id="CHEBI:59789"/>
        <dbReference type="ChEBI" id="CHEBI:87844"/>
        <dbReference type="EC" id="2.1.1.329"/>
    </reaction>
</comment>
<comment type="pathway">
    <text evidence="1">Cofactor biosynthesis; phylloquinone biosynthesis.</text>
</comment>
<comment type="similarity">
    <text evidence="1">Belongs to the class I-like SAM-binding methyltransferase superfamily. MenG/UbiE family.</text>
</comment>
<reference key="1">
    <citation type="journal article" date="2002" name="DNA Res.">
        <title>Complete genome structure of the thermophilic cyanobacterium Thermosynechococcus elongatus BP-1.</title>
        <authorList>
            <person name="Nakamura Y."/>
            <person name="Kaneko T."/>
            <person name="Sato S."/>
            <person name="Ikeuchi M."/>
            <person name="Katoh H."/>
            <person name="Sasamoto S."/>
            <person name="Watanabe A."/>
            <person name="Iriguchi M."/>
            <person name="Kawashima K."/>
            <person name="Kimura T."/>
            <person name="Kishida Y."/>
            <person name="Kiyokawa C."/>
            <person name="Kohara M."/>
            <person name="Matsumoto M."/>
            <person name="Matsuno A."/>
            <person name="Nakazaki N."/>
            <person name="Shimpo S."/>
            <person name="Sugimoto M."/>
            <person name="Takeuchi C."/>
            <person name="Yamada M."/>
            <person name="Tabata S."/>
        </authorList>
    </citation>
    <scope>NUCLEOTIDE SEQUENCE [LARGE SCALE GENOMIC DNA]</scope>
    <source>
        <strain>NIES-2133 / IAM M-273 / BP-1</strain>
    </source>
</reference>
<protein>
    <recommendedName>
        <fullName evidence="1">2-phytyl-1,4-naphtoquinone methyltransferase</fullName>
        <ecNumber evidence="1">2.1.1.329</ecNumber>
    </recommendedName>
    <alternativeName>
        <fullName evidence="1">Demethylphylloquinone methyltransferase</fullName>
    </alternativeName>
</protein>
<proteinExistence type="inferred from homology"/>
<feature type="chain" id="PRO_0000193340" description="2-phytyl-1,4-naphtoquinone methyltransferase">
    <location>
        <begin position="1"/>
        <end position="225"/>
    </location>
</feature>
<evidence type="ECO:0000255" key="1">
    <source>
        <dbReference type="HAMAP-Rule" id="MF_01982"/>
    </source>
</evidence>
<organism>
    <name type="scientific">Thermosynechococcus vestitus (strain NIES-2133 / IAM M-273 / BP-1)</name>
    <dbReference type="NCBI Taxonomy" id="197221"/>
    <lineage>
        <taxon>Bacteria</taxon>
        <taxon>Bacillati</taxon>
        <taxon>Cyanobacteriota</taxon>
        <taxon>Cyanophyceae</taxon>
        <taxon>Acaryochloridales</taxon>
        <taxon>Thermosynechococcaceae</taxon>
        <taxon>Thermosynechococcus</taxon>
    </lineage>
</organism>
<name>MENG_THEVB</name>
<accession>Q8DGE4</accession>
<keyword id="KW-0489">Methyltransferase</keyword>
<keyword id="KW-1185">Reference proteome</keyword>
<keyword id="KW-0949">S-adenosyl-L-methionine</keyword>
<keyword id="KW-0808">Transferase</keyword>